<name>SPIKE_CVBQ</name>
<accession>P25193</accession>
<accession>Q77NC4</accession>
<keyword id="KW-0175">Coiled coil</keyword>
<keyword id="KW-1015">Disulfide bond</keyword>
<keyword id="KW-1170">Fusion of virus membrane with host endosomal membrane</keyword>
<keyword id="KW-1168">Fusion of virus membrane with host membrane</keyword>
<keyword id="KW-0325">Glycoprotein</keyword>
<keyword id="KW-1032">Host cell membrane</keyword>
<keyword id="KW-1043">Host membrane</keyword>
<keyword id="KW-0945">Host-virus interaction</keyword>
<keyword id="KW-0449">Lipoprotein</keyword>
<keyword id="KW-0472">Membrane</keyword>
<keyword id="KW-0564">Palmitate</keyword>
<keyword id="KW-0732">Signal</keyword>
<keyword id="KW-0812">Transmembrane</keyword>
<keyword id="KW-1133">Transmembrane helix</keyword>
<keyword id="KW-1161">Viral attachment to host cell</keyword>
<keyword id="KW-0261">Viral envelope protein</keyword>
<keyword id="KW-1162">Viral penetration into host cytoplasm</keyword>
<keyword id="KW-0946">Virion</keyword>
<keyword id="KW-0843">Virulence</keyword>
<keyword id="KW-1160">Virus entry into host cell</keyword>
<protein>
    <recommendedName>
        <fullName evidence="2">Spike glycoprotein</fullName>
        <shortName evidence="2">S glycoprotein</shortName>
    </recommendedName>
    <alternativeName>
        <fullName evidence="2">E2</fullName>
    </alternativeName>
    <alternativeName>
        <fullName evidence="2">Peplomer protein</fullName>
    </alternativeName>
    <component>
        <recommendedName>
            <fullName evidence="2">Spike protein S1</fullName>
        </recommendedName>
    </component>
    <component>
        <recommendedName>
            <fullName evidence="2">Spike protein S2</fullName>
        </recommendedName>
    </component>
    <component>
        <recommendedName>
            <fullName evidence="2">Spike protein S2'</fullName>
        </recommendedName>
    </component>
</protein>
<comment type="function">
    <molecule>Spike protein S1</molecule>
    <text evidence="2">Attaches the virion to the cell membrane by interacting with host receptor, initiating the infection.</text>
</comment>
<comment type="function">
    <molecule>Spike protein S2</molecule>
    <text evidence="2">Mediates fusion of the virion and cellular membranes by acting as a class I viral fusion protein. Under the current model, the protein has at least three conformational states: pre-fusion native state, pre-hairpin intermediate state, and post-fusion hairpin state. During viral and target cell membrane fusion, the coiled coil regions (heptad repeats) assume a trimer-of-hairpins structure, positioning the fusion peptide in close proximity to the C-terminal region of the ectodomain. The formation of this structure appears to drive apposition and subsequent fusion of viral and target cell membranes.</text>
</comment>
<comment type="function">
    <molecule>Spike protein S2'</molecule>
    <text evidence="2">Acts as a viral fusion peptide which is unmasked following S2 cleavage occurring upon virus endocytosis.</text>
</comment>
<comment type="subunit">
    <text evidence="2">Homotrimer; each monomer consists of a S1 and a S2 subunit. The resulting peplomers protrude from the virus surface as spikes.</text>
</comment>
<comment type="subcellular location">
    <subcellularLocation>
        <location evidence="2">Virion membrane</location>
        <topology evidence="2">Single-pass type I membrane protein</topology>
    </subcellularLocation>
    <subcellularLocation>
        <location evidence="2">Host endoplasmic reticulum-Golgi intermediate compartment membrane</location>
        <topology evidence="2">Single-pass type I membrane protein</topology>
    </subcellularLocation>
    <subcellularLocation>
        <location evidence="2">Host cell membrane</location>
        <topology evidence="2">Single-pass type I membrane protein</topology>
    </subcellularLocation>
    <text evidence="2">Accumulates in the endoplasmic reticulum-Golgi intermediate compartment, where it participates in virus particle assembly. Some S oligomers are transported to the host plasma membrane, where they may mediate cell-cell fusion.</text>
</comment>
<comment type="domain">
    <text evidence="2">Fusion peptide 1 (FP1) and fusion peptide 2 (FP2) function cooperatively and have a membrane-ordering effect on lipid headgroups and shallow hydrophobic regions of target bilayers. They are considered as two domains of an extended, bipartite FP. The membrane-ordering activity is calcium-dependent and also dependent on correct folding, which is maintained by an internal disulfide bond in FP2.</text>
</comment>
<comment type="PTM">
    <text evidence="2">Specific enzymatic cleavages in vivo yield mature proteins. The precursor is processed into S1 and S2 by host cell furin or another cellular protease to yield the mature S1 and S2 proteins. Additionally, a second cleavage leads to the release of a fusion peptide after viral attachment to host cell receptor.</text>
</comment>
<comment type="PTM">
    <text evidence="2">The cytoplasmic Cys-rich domain is palmitoylated. Spike glycoprotein is digested within host endosomes.</text>
</comment>
<comment type="similarity">
    <text evidence="2">Belongs to the betacoronaviruses spike protein family.</text>
</comment>
<dbReference type="EMBL" id="D00662">
    <property type="protein sequence ID" value="BAA00557.1"/>
    <property type="molecule type" value="Genomic_RNA"/>
</dbReference>
<dbReference type="EMBL" id="AF220295">
    <property type="protein sequence ID" value="AAL40400.1"/>
    <property type="molecule type" value="Genomic_RNA"/>
</dbReference>
<dbReference type="PIR" id="A34147">
    <property type="entry name" value="VGIHQU"/>
</dbReference>
<dbReference type="SMR" id="P25193"/>
<dbReference type="GlyCosmos" id="P25193">
    <property type="glycosylation" value="18 sites, No reported glycans"/>
</dbReference>
<dbReference type="Proteomes" id="UP000008572">
    <property type="component" value="Genome"/>
</dbReference>
<dbReference type="GO" id="GO:0044173">
    <property type="term" value="C:host cell endoplasmic reticulum-Golgi intermediate compartment membrane"/>
    <property type="evidence" value="ECO:0007669"/>
    <property type="project" value="UniProtKB-SubCell"/>
</dbReference>
<dbReference type="GO" id="GO:0020002">
    <property type="term" value="C:host cell plasma membrane"/>
    <property type="evidence" value="ECO:0007669"/>
    <property type="project" value="UniProtKB-SubCell"/>
</dbReference>
<dbReference type="GO" id="GO:0016020">
    <property type="term" value="C:membrane"/>
    <property type="evidence" value="ECO:0007669"/>
    <property type="project" value="UniProtKB-UniRule"/>
</dbReference>
<dbReference type="GO" id="GO:0019031">
    <property type="term" value="C:viral envelope"/>
    <property type="evidence" value="ECO:0007669"/>
    <property type="project" value="UniProtKB-UniRule"/>
</dbReference>
<dbReference type="GO" id="GO:0055036">
    <property type="term" value="C:virion membrane"/>
    <property type="evidence" value="ECO:0007669"/>
    <property type="project" value="UniProtKB-SubCell"/>
</dbReference>
<dbReference type="GO" id="GO:0075509">
    <property type="term" value="P:endocytosis involved in viral entry into host cell"/>
    <property type="evidence" value="ECO:0007669"/>
    <property type="project" value="UniProtKB-UniRule"/>
</dbReference>
<dbReference type="GO" id="GO:0039654">
    <property type="term" value="P:fusion of virus membrane with host endosome membrane"/>
    <property type="evidence" value="ECO:0007669"/>
    <property type="project" value="UniProtKB-UniRule"/>
</dbReference>
<dbReference type="GO" id="GO:0019064">
    <property type="term" value="P:fusion of virus membrane with host plasma membrane"/>
    <property type="evidence" value="ECO:0007669"/>
    <property type="project" value="UniProtKB-UniRule"/>
</dbReference>
<dbReference type="GO" id="GO:0046813">
    <property type="term" value="P:receptor-mediated virion attachment to host cell"/>
    <property type="evidence" value="ECO:0007669"/>
    <property type="project" value="UniProtKB-UniRule"/>
</dbReference>
<dbReference type="CDD" id="cd21485">
    <property type="entry name" value="HCoV-OC43-like_Spike_S1_RBD"/>
    <property type="match status" value="1"/>
</dbReference>
<dbReference type="CDD" id="cd22380">
    <property type="entry name" value="HKU1-CoV-like_Spike_SD1-2_S1-S2_S2"/>
    <property type="match status" value="1"/>
</dbReference>
<dbReference type="CDD" id="cd21625">
    <property type="entry name" value="MHV-like_Spike_S1_NTD"/>
    <property type="match status" value="1"/>
</dbReference>
<dbReference type="FunFam" id="1.20.5.300:FF:000003">
    <property type="entry name" value="Spike glycoprotein"/>
    <property type="match status" value="1"/>
</dbReference>
<dbReference type="FunFam" id="1.20.5.300:FF:000006">
    <property type="entry name" value="Spike glycoprotein"/>
    <property type="match status" value="1"/>
</dbReference>
<dbReference type="FunFam" id="2.60.120.960:FF:000002">
    <property type="entry name" value="Spike glycoprotein"/>
    <property type="match status" value="1"/>
</dbReference>
<dbReference type="FunFam" id="3.30.70.1840:FF:000003">
    <property type="entry name" value="Spike glycoprotein"/>
    <property type="match status" value="1"/>
</dbReference>
<dbReference type="Gene3D" id="1.20.5.300">
    <property type="match status" value="2"/>
</dbReference>
<dbReference type="Gene3D" id="3.30.70.1840">
    <property type="match status" value="1"/>
</dbReference>
<dbReference type="Gene3D" id="2.60.120.960">
    <property type="entry name" value="Spike glycoprotein, N-terminal domain"/>
    <property type="match status" value="1"/>
</dbReference>
<dbReference type="HAMAP" id="MF_04099">
    <property type="entry name" value="BETA_CORONA_SPIKE"/>
    <property type="match status" value="1"/>
</dbReference>
<dbReference type="InterPro" id="IPR032500">
    <property type="entry name" value="bCoV_S1_N"/>
</dbReference>
<dbReference type="InterPro" id="IPR042578">
    <property type="entry name" value="BETA_CORONA_SPIKE"/>
</dbReference>
<dbReference type="InterPro" id="IPR043607">
    <property type="entry name" value="CoV_S1_C"/>
</dbReference>
<dbReference type="InterPro" id="IPR043473">
    <property type="entry name" value="S2_sf_CoV"/>
</dbReference>
<dbReference type="InterPro" id="IPR043002">
    <property type="entry name" value="Spike_N_sf"/>
</dbReference>
<dbReference type="InterPro" id="IPR044339">
    <property type="entry name" value="Spike_S1_NTD_MHV-like"/>
</dbReference>
<dbReference type="InterPro" id="IPR018548">
    <property type="entry name" value="Spike_S1_RBD_bCoV"/>
</dbReference>
<dbReference type="InterPro" id="IPR044372">
    <property type="entry name" value="Spike_S1_RBD_HCoV-OC43-like"/>
</dbReference>
<dbReference type="InterPro" id="IPR036326">
    <property type="entry name" value="Spike_S1_RBD_sf_bCoV"/>
</dbReference>
<dbReference type="InterPro" id="IPR002552">
    <property type="entry name" value="Spike_S2_CoV"/>
</dbReference>
<dbReference type="InterPro" id="IPR043614">
    <property type="entry name" value="Spike_S2_CoV_C"/>
</dbReference>
<dbReference type="InterPro" id="IPR044873">
    <property type="entry name" value="Spike_S2_CoV_HR1"/>
</dbReference>
<dbReference type="InterPro" id="IPR044874">
    <property type="entry name" value="Spike_S2_CoV_HR2"/>
</dbReference>
<dbReference type="Pfam" id="PF16451">
    <property type="entry name" value="bCoV_S1_N"/>
    <property type="match status" value="1"/>
</dbReference>
<dbReference type="Pfam" id="PF09408">
    <property type="entry name" value="bCoV_S1_RBD"/>
    <property type="match status" value="1"/>
</dbReference>
<dbReference type="Pfam" id="PF19209">
    <property type="entry name" value="CoV_S1_C"/>
    <property type="match status" value="1"/>
</dbReference>
<dbReference type="Pfam" id="PF01601">
    <property type="entry name" value="CoV_S2"/>
    <property type="match status" value="1"/>
</dbReference>
<dbReference type="Pfam" id="PF19214">
    <property type="entry name" value="CoV_S2_C"/>
    <property type="match status" value="1"/>
</dbReference>
<dbReference type="SUPFAM" id="SSF111474">
    <property type="entry name" value="Coronavirus S2 glycoprotein"/>
    <property type="match status" value="2"/>
</dbReference>
<dbReference type="SUPFAM" id="SSF143587">
    <property type="entry name" value="SARS receptor-binding domain-like"/>
    <property type="match status" value="1"/>
</dbReference>
<dbReference type="PROSITE" id="PS51921">
    <property type="entry name" value="BCOV_S1_CTD"/>
    <property type="match status" value="1"/>
</dbReference>
<dbReference type="PROSITE" id="PS51922">
    <property type="entry name" value="BCOV_S1_NTD"/>
    <property type="match status" value="1"/>
</dbReference>
<dbReference type="PROSITE" id="PS51923">
    <property type="entry name" value="COV_S2_HR1"/>
    <property type="match status" value="1"/>
</dbReference>
<dbReference type="PROSITE" id="PS51924">
    <property type="entry name" value="COV_S2_HR2"/>
    <property type="match status" value="1"/>
</dbReference>
<evidence type="ECO:0000250" key="1"/>
<evidence type="ECO:0000255" key="2">
    <source>
        <dbReference type="HAMAP-Rule" id="MF_04099"/>
    </source>
</evidence>
<evidence type="ECO:0000255" key="3">
    <source>
        <dbReference type="PROSITE-ProRule" id="PRU01269"/>
    </source>
</evidence>
<evidence type="ECO:0000255" key="4">
    <source>
        <dbReference type="PROSITE-ProRule" id="PRU01270"/>
    </source>
</evidence>
<sequence length="1363" mass="150870">MFLILLISLPMAFAVIGDLKCTTVSINDVDTGAPSISTDIVDVTNGLGTYYVLDRVYLNTTLLLNGYYPTSGSTYRNMALKGTLLLSRLWFKPPFLSDFINGIFAKVKNTKVIKKGVMYSEFPAITIGSTFVNTSYSVVVQPHTTNLDNKLQGLLEISVCQYTMCEYPHTICHPKLGNKRVELWHWDTGVVSCLYKRNFTYDVNADYLYFHFYQEGGTFYAYFTDTGVVTKFLFNVYLGTVLSHYYVLPLTCSSAMTLEYWVTPLTSKQYLLAFNQDGVIFNAVDCKSDFMSEIKCKTLSIAPSTGVYELNGYTVQPIADVYRRIPNLPDCNIEAWLNDKSVPSPLNWERKTFSNCNFNMSSLMSFIQADSFTCNNIDAAKIYGMCFSSITIDKFAIPNGRKVDLQLGNLGYLQSFNYRIDTTATSCQLYYNLPAANVSVSRFNPSTWNRRFGFTEQFVFKPQPVGVFTHHDVVYAQHCFKAPKNFCPCKLDGSLCVGNGPGIDAGYKNSGIGTCPAGTNYLTCHNAAQCDCLCTPDPITSKSTGPYKCPQTKYLVGIGEHCSGLAIKSDYCGGNPCTCQPQAFLGWSVDSCLQGDRCNIFANFIFHDVNSGTTCSTDLQKSNTDIILGVCVNYDLYGITGQGIFVEVNATYYNSWQNLLYDSNGNLYGFRDYLTNRTFMIRSCYSGRVSAAFHANSSEPALLFRNIKCNYVFNNTLSRQLQPINYFDSYLGCVVNADNSTSSVVQTCDLTVGSGYCVDYSTKRRSRRAITTGYRFTNFEPFTVNSVNDSLEPVGGLYEIQIPSEFTIGNMEEFIQTSSPKVTIDCSAFVCGDYAACKSQLVEYGSFCDNINAILTEVNELLDTTQLQVANSLMNGVTLSTKLKDGVNFNVDDINFSPVLGCLGSACNKVSSRSAIEDLLFSKVKLSDVGFVEAYNNCTGGAEIRDLICVQSYNGIKVLPPLLSVNQISGYTLAATSASLFPPLSAAVGVPFYLNVQYRINGIGVTMDVLSQNQKLIANAFNNALDAIQEGFDATNSALVKIQAVVNANAEALNNLLQQLSNRFGAISSSLQEILSRLDALEAQAQIDRLINGRLTALNVYVSQQLSDSTLVKFSAAQAMEKVNECVKSQSSRINFCGNGNHIISLVQNAPYGLYFIHFSYVPTKYVTAKVSPGLCIAGDRGIAPKSGYFVNVNNTWMFTGSGYYYPEPITGNNVVVMSTCAVNYTKAPDVMLNISTPNLHDFKEELDQWFKNQTSVAPDLSLDYINVTFLDLQDEMNRLQEAIKVLNQSYINLKDIGTYEYYVKWPWYVWLLIGFAGVAMLVLLFFICCCTGCGTSCFKICGGCCDDYTGHQELVIKTSHDD</sequence>
<feature type="signal peptide" evidence="2">
    <location>
        <begin position="1"/>
        <end position="13"/>
    </location>
</feature>
<feature type="chain" id="PRO_0000037196" description="Spike glycoprotein">
    <location>
        <begin position="14"/>
        <end position="1363"/>
    </location>
</feature>
<feature type="chain" id="PRO_0000037197" description="Spike protein S1">
    <location>
        <begin position="14"/>
        <end position="768"/>
    </location>
</feature>
<feature type="chain" id="PRO_0000037198" description="Spike protein S2">
    <location>
        <begin position="769"/>
        <end position="1363"/>
    </location>
</feature>
<feature type="chain" id="PRO_0000444076" description="Spike protein S2'" evidence="2">
    <location>
        <begin position="914"/>
        <end position="1363"/>
    </location>
</feature>
<feature type="topological domain" description="Extracellular" evidence="2">
    <location>
        <begin position="14"/>
        <end position="1307"/>
    </location>
</feature>
<feature type="transmembrane region" description="Helical" evidence="2">
    <location>
        <begin position="1308"/>
        <end position="1328"/>
    </location>
</feature>
<feature type="topological domain" description="Cytoplasmic" evidence="2">
    <location>
        <begin position="1329"/>
        <end position="1363"/>
    </location>
</feature>
<feature type="domain" description="BetaCoV S1-NTD" evidence="4">
    <location>
        <begin position="15"/>
        <end position="298"/>
    </location>
</feature>
<feature type="domain" description="BetaCoV S1-CTD" evidence="3">
    <location>
        <begin position="329"/>
        <end position="617"/>
    </location>
</feature>
<feature type="region of interest" description="Fusion peptide 1" evidence="2">
    <location>
        <begin position="914"/>
        <end position="935"/>
    </location>
</feature>
<feature type="region of interest" description="Fusion peptide 2" evidence="2">
    <location>
        <begin position="933"/>
        <end position="953"/>
    </location>
</feature>
<feature type="region of interest" description="Heptad repeat 1" evidence="2">
    <location>
        <begin position="1014"/>
        <end position="1064"/>
    </location>
</feature>
<feature type="region of interest" description="Heptad repeat 2" evidence="2">
    <location>
        <begin position="1258"/>
        <end position="1296"/>
    </location>
</feature>
<feature type="coiled-coil region" evidence="2">
    <location>
        <begin position="1043"/>
        <end position="1087"/>
    </location>
</feature>
<feature type="coiled-coil region" evidence="2">
    <location>
        <begin position="1269"/>
        <end position="1297"/>
    </location>
</feature>
<feature type="short sequence motif" description="KxHxx" evidence="2">
    <location>
        <begin position="1359"/>
        <end position="1363"/>
    </location>
</feature>
<feature type="site" description="Cleavage; by host" evidence="1">
    <location>
        <begin position="768"/>
        <end position="769"/>
    </location>
</feature>
<feature type="site" description="Cleavage" evidence="2">
    <location>
        <begin position="913"/>
        <end position="914"/>
    </location>
</feature>
<feature type="glycosylation site" description="N-linked (GlcNAc...) asparagine; by host" evidence="2">
    <location>
        <position position="59"/>
    </location>
</feature>
<feature type="glycosylation site" description="N-linked (GlcNAc...) asparagine; by host" evidence="2">
    <location>
        <position position="133"/>
    </location>
</feature>
<feature type="glycosylation site" description="N-linked (GlcNAc...) asparagine; by host" evidence="2">
    <location>
        <position position="198"/>
    </location>
</feature>
<feature type="glycosylation site" description="N-linked (GlcNAc...) asparagine; by host" evidence="2">
    <location>
        <position position="359"/>
    </location>
</feature>
<feature type="glycosylation site" description="N-linked (GlcNAc...) asparagine; by host" evidence="2">
    <location>
        <position position="437"/>
    </location>
</feature>
<feature type="glycosylation site" description="N-linked (GlcNAc...) asparagine; by host" evidence="2">
    <location>
        <position position="649"/>
    </location>
</feature>
<feature type="glycosylation site" description="N-linked (GlcNAc...) asparagine; by host" evidence="2">
    <location>
        <position position="676"/>
    </location>
</feature>
<feature type="glycosylation site" description="N-linked (GlcNAc...) asparagine; by host" evidence="2">
    <location>
        <position position="696"/>
    </location>
</feature>
<feature type="glycosylation site" description="N-linked (GlcNAc...) asparagine; by host" evidence="2">
    <location>
        <position position="714"/>
    </location>
</feature>
<feature type="glycosylation site" description="N-linked (GlcNAc...) asparagine; by host" evidence="2">
    <location>
        <position position="739"/>
    </location>
</feature>
<feature type="glycosylation site" description="N-linked (GlcNAc...) asparagine; by host" evidence="2">
    <location>
        <position position="788"/>
    </location>
</feature>
<feature type="glycosylation site" description="N-linked (GlcNAc...) asparagine; by host" evidence="2">
    <location>
        <position position="937"/>
    </location>
</feature>
<feature type="glycosylation site" description="N-linked (GlcNAc...) asparagine; by host" evidence="2">
    <location>
        <position position="1194"/>
    </location>
</feature>
<feature type="glycosylation site" description="N-linked (GlcNAc...) asparagine; by host" evidence="2">
    <location>
        <position position="1224"/>
    </location>
</feature>
<feature type="glycosylation site" description="N-linked (GlcNAc...) asparagine; by host" evidence="2">
    <location>
        <position position="1234"/>
    </location>
</feature>
<feature type="glycosylation site" description="N-linked (GlcNAc...) asparagine; by host" evidence="2">
    <location>
        <position position="1253"/>
    </location>
</feature>
<feature type="glycosylation site" description="N-linked (GlcNAc...) asparagine; by host" evidence="2">
    <location>
        <position position="1267"/>
    </location>
</feature>
<feature type="glycosylation site" description="N-linked (GlcNAc...) asparagine; by host" evidence="2">
    <location>
        <position position="1288"/>
    </location>
</feature>
<feature type="disulfide bond" evidence="4">
    <location>
        <begin position="21"/>
        <end position="165"/>
    </location>
</feature>
<feature type="disulfide bond" evidence="4">
    <location>
        <begin position="160"/>
        <end position="193"/>
    </location>
</feature>
<feature type="disulfide bond" evidence="4">
    <location>
        <begin position="172"/>
        <end position="252"/>
    </location>
</feature>
<feature type="disulfide bond" evidence="4">
    <location>
        <begin position="286"/>
        <end position="296"/>
    </location>
</feature>
<feature type="disulfide bond" evidence="3">
    <location>
        <begin position="331"/>
        <end position="356"/>
    </location>
</feature>
<feature type="disulfide bond" evidence="3">
    <location>
        <begin position="374"/>
        <end position="427"/>
    </location>
</feature>
<feature type="disulfide bond" evidence="3">
    <location>
        <begin position="386"/>
        <end position="615"/>
    </location>
</feature>
<feature type="disulfide bond" evidence="2">
    <location>
        <begin position="938"/>
        <end position="949"/>
    </location>
</feature>
<reference key="1">
    <citation type="journal article" date="1990" name="J. Gen. Virol.">
        <title>Primary structure of the S peplomer gene of bovine coronavirus and surface expression in insect cells.</title>
        <authorList>
            <person name="Parker M.D."/>
            <person name="Yoo D."/>
            <person name="Cox G.J."/>
            <person name="Babiuk L.A."/>
        </authorList>
    </citation>
    <scope>NUCLEOTIDE SEQUENCE [GENOMIC RNA]</scope>
</reference>
<reference key="2">
    <citation type="journal article" date="2001" name="Adv. Exp. Med. Biol.">
        <title>Full-length genomic sequence of bovine coronavirus (31 kb). Completion of the open reading frame 1a/1b sequences.</title>
        <authorList>
            <person name="Yoo D."/>
            <person name="Pei Y."/>
        </authorList>
    </citation>
    <scope>NUCLEOTIDE SEQUENCE [GENOMIC RNA]</scope>
</reference>
<gene>
    <name evidence="2" type="primary">S</name>
    <name type="ORF">3</name>
</gene>
<proteinExistence type="inferred from homology"/>
<organismHost>
    <name type="scientific">Bos taurus</name>
    <name type="common">Bovine</name>
    <dbReference type="NCBI Taxonomy" id="9913"/>
</organismHost>
<organism>
    <name type="scientific">Bovine coronavirus (strain Quebec)</name>
    <name type="common">BCoV</name>
    <name type="synonym">BCV</name>
    <dbReference type="NCBI Taxonomy" id="11133"/>
    <lineage>
        <taxon>Viruses</taxon>
        <taxon>Riboviria</taxon>
        <taxon>Orthornavirae</taxon>
        <taxon>Pisuviricota</taxon>
        <taxon>Pisoniviricetes</taxon>
        <taxon>Nidovirales</taxon>
        <taxon>Cornidovirineae</taxon>
        <taxon>Coronaviridae</taxon>
        <taxon>Orthocoronavirinae</taxon>
        <taxon>Betacoronavirus</taxon>
        <taxon>Embecovirus</taxon>
        <taxon>Betacoronavirus 1</taxon>
    </lineage>
</organism>